<reference evidence="4" key="1">
    <citation type="journal article" date="2006" name="Comp. Biochem. Physiol.">
        <title>Comparison of the partial proteomes of the venoms of Brazilian spiders of the genus Phoneutria.</title>
        <authorList>
            <person name="Richardson M."/>
            <person name="Pimenta A.M."/>
            <person name="Bemquerer M.P."/>
            <person name="Santoro M.M."/>
            <person name="Beirao P.S."/>
            <person name="Lima M.E."/>
            <person name="Figueiredo S.G."/>
            <person name="Bloch C. Jr."/>
            <person name="Vasconcelos E.A."/>
            <person name="Campos F.A."/>
            <person name="Gomes P.C."/>
            <person name="Cordeiro M.N."/>
        </authorList>
    </citation>
    <scope>PROTEIN SEQUENCE</scope>
    <scope>SUBCELLULAR LOCATION</scope>
    <scope>TISSUE SPECIFICITY</scope>
    <scope>MASS SPECTROMETRY</scope>
    <source>
        <tissue evidence="2">Venom</tissue>
    </source>
</reference>
<keyword id="KW-0903">Direct protein sequencing</keyword>
<keyword id="KW-1015">Disulfide bond</keyword>
<keyword id="KW-0960">Knottin</keyword>
<keyword id="KW-0964">Secreted</keyword>
<dbReference type="SMR" id="P84013"/>
<dbReference type="ArachnoServer" id="AS000235">
    <property type="toxin name" value="U9-ctenitoxin-Pk1a"/>
</dbReference>
<dbReference type="GO" id="GO:0005576">
    <property type="term" value="C:extracellular region"/>
    <property type="evidence" value="ECO:0007669"/>
    <property type="project" value="UniProtKB-SubCell"/>
</dbReference>
<sequence length="38" mass="4542">ECIGHRRSCKEDRNGCCKLYTCNCWYPTPDDQWCKCLL</sequence>
<name>TX29A_PHOKE</name>
<accession>P84013</accession>
<evidence type="ECO:0000250" key="1"/>
<evidence type="ECO:0000269" key="2">
    <source>
    </source>
</evidence>
<evidence type="ECO:0000303" key="3">
    <source>
    </source>
</evidence>
<evidence type="ECO:0000305" key="4"/>
<comment type="subcellular location">
    <subcellularLocation>
        <location evidence="2">Secreted</location>
    </subcellularLocation>
</comment>
<comment type="tissue specificity">
    <text evidence="2">Expressed by the venom gland.</text>
</comment>
<comment type="domain">
    <text evidence="1">The presence of a 'disulfide through disulfide knot' structurally defines this protein as a knottin.</text>
</comment>
<comment type="mass spectrometry" mass="4734.4" method="Electrospray" evidence="2"/>
<comment type="similarity">
    <text>Belongs to the neurotoxin 02 (plectoxin) family. 09 subfamily.</text>
</comment>
<organism>
    <name type="scientific">Phoneutria keyserlingi</name>
    <name type="common">Brazilian wandering spider</name>
    <name type="synonym">Ctenus keyserlingii</name>
    <dbReference type="NCBI Taxonomy" id="272754"/>
    <lineage>
        <taxon>Eukaryota</taxon>
        <taxon>Metazoa</taxon>
        <taxon>Ecdysozoa</taxon>
        <taxon>Arthropoda</taxon>
        <taxon>Chelicerata</taxon>
        <taxon>Arachnida</taxon>
        <taxon>Araneae</taxon>
        <taxon>Araneomorphae</taxon>
        <taxon>Entelegynae</taxon>
        <taxon>Lycosoidea</taxon>
        <taxon>Ctenidae</taxon>
        <taxon>Phoneutria</taxon>
    </lineage>
</organism>
<proteinExistence type="evidence at protein level"/>
<protein>
    <recommendedName>
        <fullName>U9-ctenitoxin-Pk1a</fullName>
        <shortName>U9-CNTX-Pk1a</shortName>
    </recommendedName>
    <alternativeName>
        <fullName>Venom protein PKTx22C1</fullName>
    </alternativeName>
</protein>
<feature type="chain" id="PRO_0000087644" description="U9-ctenitoxin-Pk1a">
    <location>
        <begin position="1"/>
        <end position="38" status="greater than"/>
    </location>
</feature>
<feature type="disulfide bond" evidence="1">
    <location>
        <begin position="2"/>
        <end position="17"/>
    </location>
</feature>
<feature type="disulfide bond" evidence="1">
    <location>
        <begin position="9"/>
        <end position="22"/>
    </location>
</feature>
<feature type="disulfide bond" evidence="1">
    <location>
        <begin position="16"/>
        <end position="36"/>
    </location>
</feature>
<feature type="disulfide bond" evidence="1">
    <location>
        <begin position="24"/>
        <end position="34"/>
    </location>
</feature>
<feature type="non-terminal residue" evidence="3">
    <location>
        <position position="38"/>
    </location>
</feature>